<organism>
    <name type="scientific">Chlorobaculum tepidum (strain ATCC 49652 / DSM 12025 / NBRC 103806 / TLS)</name>
    <name type="common">Chlorobium tepidum</name>
    <dbReference type="NCBI Taxonomy" id="194439"/>
    <lineage>
        <taxon>Bacteria</taxon>
        <taxon>Pseudomonadati</taxon>
        <taxon>Chlorobiota</taxon>
        <taxon>Chlorobiia</taxon>
        <taxon>Chlorobiales</taxon>
        <taxon>Chlorobiaceae</taxon>
        <taxon>Chlorobaculum</taxon>
    </lineage>
</organism>
<protein>
    <recommendedName>
        <fullName evidence="1">Large ribosomal subunit protein uL22</fullName>
    </recommendedName>
    <alternativeName>
        <fullName evidence="2">50S ribosomal protein L22</fullName>
    </alternativeName>
</protein>
<gene>
    <name evidence="1" type="primary">rplV</name>
    <name type="ordered locus">CT2184</name>
</gene>
<feature type="chain" id="PRO_0000125139" description="Large ribosomal subunit protein uL22">
    <location>
        <begin position="1"/>
        <end position="119"/>
    </location>
</feature>
<comment type="function">
    <text evidence="1">This protein binds specifically to 23S rRNA; its binding is stimulated by other ribosomal proteins, e.g. L4, L17, and L20. It is important during the early stages of 50S assembly. It makes multiple contacts with different domains of the 23S rRNA in the assembled 50S subunit and ribosome (By similarity).</text>
</comment>
<comment type="function">
    <text evidence="1">The globular domain of the protein is located near the polypeptide exit tunnel on the outside of the subunit, while an extended beta-hairpin is found that lines the wall of the exit tunnel in the center of the 70S ribosome.</text>
</comment>
<comment type="subunit">
    <text evidence="1">Part of the 50S ribosomal subunit.</text>
</comment>
<comment type="similarity">
    <text evidence="1">Belongs to the universal ribosomal protein uL22 family.</text>
</comment>
<accession>Q8KAH7</accession>
<evidence type="ECO:0000255" key="1">
    <source>
        <dbReference type="HAMAP-Rule" id="MF_01331"/>
    </source>
</evidence>
<evidence type="ECO:0000305" key="2"/>
<name>RL22_CHLTE</name>
<reference key="1">
    <citation type="journal article" date="2002" name="Proc. Natl. Acad. Sci. U.S.A.">
        <title>The complete genome sequence of Chlorobium tepidum TLS, a photosynthetic, anaerobic, green-sulfur bacterium.</title>
        <authorList>
            <person name="Eisen J.A."/>
            <person name="Nelson K.E."/>
            <person name="Paulsen I.T."/>
            <person name="Heidelberg J.F."/>
            <person name="Wu M."/>
            <person name="Dodson R.J."/>
            <person name="DeBoy R.T."/>
            <person name="Gwinn M.L."/>
            <person name="Nelson W.C."/>
            <person name="Haft D.H."/>
            <person name="Hickey E.K."/>
            <person name="Peterson J.D."/>
            <person name="Durkin A.S."/>
            <person name="Kolonay J.F."/>
            <person name="Yang F."/>
            <person name="Holt I.E."/>
            <person name="Umayam L.A."/>
            <person name="Mason T.M."/>
            <person name="Brenner M."/>
            <person name="Shea T.P."/>
            <person name="Parksey D.S."/>
            <person name="Nierman W.C."/>
            <person name="Feldblyum T.V."/>
            <person name="Hansen C.L."/>
            <person name="Craven M.B."/>
            <person name="Radune D."/>
            <person name="Vamathevan J.J."/>
            <person name="Khouri H.M."/>
            <person name="White O."/>
            <person name="Gruber T.M."/>
            <person name="Ketchum K.A."/>
            <person name="Venter J.C."/>
            <person name="Tettelin H."/>
            <person name="Bryant D.A."/>
            <person name="Fraser C.M."/>
        </authorList>
    </citation>
    <scope>NUCLEOTIDE SEQUENCE [LARGE SCALE GENOMIC DNA]</scope>
    <source>
        <strain>ATCC 49652 / DSM 12025 / NBRC 103806 / TLS</strain>
    </source>
</reference>
<sequence>MQAKAILRHTPTSPRKMRLVAGLVRGKRVDQAKAILHNSTKSASRNVMVTLKSAVANWSQLNPDERLNDNELFVKAIFVDEGPSLKRLLPAPMGRAYRIRKRSNHLTIVVDKVENKVTK</sequence>
<keyword id="KW-1185">Reference proteome</keyword>
<keyword id="KW-0687">Ribonucleoprotein</keyword>
<keyword id="KW-0689">Ribosomal protein</keyword>
<keyword id="KW-0694">RNA-binding</keyword>
<keyword id="KW-0699">rRNA-binding</keyword>
<dbReference type="EMBL" id="AE006470">
    <property type="protein sequence ID" value="AAM73400.1"/>
    <property type="molecule type" value="Genomic_DNA"/>
</dbReference>
<dbReference type="RefSeq" id="NP_663058.1">
    <property type="nucleotide sequence ID" value="NC_002932.3"/>
</dbReference>
<dbReference type="RefSeq" id="WP_010933837.1">
    <property type="nucleotide sequence ID" value="NC_002932.3"/>
</dbReference>
<dbReference type="SMR" id="Q8KAH7"/>
<dbReference type="STRING" id="194439.CT2184"/>
<dbReference type="EnsemblBacteria" id="AAM73400">
    <property type="protein sequence ID" value="AAM73400"/>
    <property type="gene ID" value="CT2184"/>
</dbReference>
<dbReference type="KEGG" id="cte:CT2184"/>
<dbReference type="PATRIC" id="fig|194439.7.peg.1983"/>
<dbReference type="eggNOG" id="COG0091">
    <property type="taxonomic scope" value="Bacteria"/>
</dbReference>
<dbReference type="HOGENOM" id="CLU_083987_3_1_10"/>
<dbReference type="OrthoDB" id="9805969at2"/>
<dbReference type="Proteomes" id="UP000001007">
    <property type="component" value="Chromosome"/>
</dbReference>
<dbReference type="GO" id="GO:0022625">
    <property type="term" value="C:cytosolic large ribosomal subunit"/>
    <property type="evidence" value="ECO:0007669"/>
    <property type="project" value="TreeGrafter"/>
</dbReference>
<dbReference type="GO" id="GO:0019843">
    <property type="term" value="F:rRNA binding"/>
    <property type="evidence" value="ECO:0007669"/>
    <property type="project" value="UniProtKB-UniRule"/>
</dbReference>
<dbReference type="GO" id="GO:0003735">
    <property type="term" value="F:structural constituent of ribosome"/>
    <property type="evidence" value="ECO:0007669"/>
    <property type="project" value="InterPro"/>
</dbReference>
<dbReference type="GO" id="GO:0006412">
    <property type="term" value="P:translation"/>
    <property type="evidence" value="ECO:0007669"/>
    <property type="project" value="UniProtKB-UniRule"/>
</dbReference>
<dbReference type="CDD" id="cd00336">
    <property type="entry name" value="Ribosomal_L22"/>
    <property type="match status" value="1"/>
</dbReference>
<dbReference type="Gene3D" id="3.90.470.10">
    <property type="entry name" value="Ribosomal protein L22/L17"/>
    <property type="match status" value="1"/>
</dbReference>
<dbReference type="HAMAP" id="MF_01331_B">
    <property type="entry name" value="Ribosomal_uL22_B"/>
    <property type="match status" value="1"/>
</dbReference>
<dbReference type="InterPro" id="IPR001063">
    <property type="entry name" value="Ribosomal_uL22"/>
</dbReference>
<dbReference type="InterPro" id="IPR005727">
    <property type="entry name" value="Ribosomal_uL22_bac/chlpt-type"/>
</dbReference>
<dbReference type="InterPro" id="IPR047867">
    <property type="entry name" value="Ribosomal_uL22_bac/org-type"/>
</dbReference>
<dbReference type="InterPro" id="IPR036394">
    <property type="entry name" value="Ribosomal_uL22_sf"/>
</dbReference>
<dbReference type="NCBIfam" id="TIGR01044">
    <property type="entry name" value="rplV_bact"/>
    <property type="match status" value="1"/>
</dbReference>
<dbReference type="PANTHER" id="PTHR13501">
    <property type="entry name" value="CHLOROPLAST 50S RIBOSOMAL PROTEIN L22-RELATED"/>
    <property type="match status" value="1"/>
</dbReference>
<dbReference type="PANTHER" id="PTHR13501:SF8">
    <property type="entry name" value="LARGE RIBOSOMAL SUBUNIT PROTEIN UL22M"/>
    <property type="match status" value="1"/>
</dbReference>
<dbReference type="Pfam" id="PF00237">
    <property type="entry name" value="Ribosomal_L22"/>
    <property type="match status" value="1"/>
</dbReference>
<dbReference type="SUPFAM" id="SSF54843">
    <property type="entry name" value="Ribosomal protein L22"/>
    <property type="match status" value="1"/>
</dbReference>
<proteinExistence type="inferred from homology"/>